<comment type="function">
    <text evidence="1">Involved in the post-transcriptional modification of the uridine at the wobble position (U34) of tRNA(Lys), tRNA(Glu) and tRNA(Gln). Catalyzes the conversion of 2-thiouridine (S2U-RNA) to 2-selenouridine (Se2U-RNA). Acts in a two-step process involving geranylation of 2-thiouridine (S2U) to S-geranyl-2-thiouridine (geS2U) and subsequent selenation of the latter derivative to 2-selenouridine (Se2U) in the tRNA chain.</text>
</comment>
<comment type="catalytic activity">
    <reaction evidence="1">
        <text>5-methylaminomethyl-2-thiouridine(34) in tRNA + selenophosphate + (2E)-geranyl diphosphate + H2O + H(+) = 5-methylaminomethyl-2-selenouridine(34) in tRNA + (2E)-thiogeraniol + phosphate + diphosphate</text>
        <dbReference type="Rhea" id="RHEA:42716"/>
        <dbReference type="Rhea" id="RHEA-COMP:10195"/>
        <dbReference type="Rhea" id="RHEA-COMP:10196"/>
        <dbReference type="ChEBI" id="CHEBI:15377"/>
        <dbReference type="ChEBI" id="CHEBI:15378"/>
        <dbReference type="ChEBI" id="CHEBI:16144"/>
        <dbReference type="ChEBI" id="CHEBI:33019"/>
        <dbReference type="ChEBI" id="CHEBI:43474"/>
        <dbReference type="ChEBI" id="CHEBI:58057"/>
        <dbReference type="ChEBI" id="CHEBI:74455"/>
        <dbReference type="ChEBI" id="CHEBI:82743"/>
        <dbReference type="ChEBI" id="CHEBI:143703"/>
        <dbReference type="EC" id="2.9.1.3"/>
    </reaction>
    <physiologicalReaction direction="left-to-right" evidence="1">
        <dbReference type="Rhea" id="RHEA:42717"/>
    </physiologicalReaction>
</comment>
<comment type="catalytic activity">
    <reaction evidence="1">
        <text>5-methylaminomethyl-2-thiouridine(34) in tRNA + (2E)-geranyl diphosphate = 5-methylaminomethyl-S-(2E)-geranyl-thiouridine(34) in tRNA + diphosphate</text>
        <dbReference type="Rhea" id="RHEA:14085"/>
        <dbReference type="Rhea" id="RHEA-COMP:10195"/>
        <dbReference type="Rhea" id="RHEA-COMP:14654"/>
        <dbReference type="ChEBI" id="CHEBI:33019"/>
        <dbReference type="ChEBI" id="CHEBI:58057"/>
        <dbReference type="ChEBI" id="CHEBI:74455"/>
        <dbReference type="ChEBI" id="CHEBI:140632"/>
    </reaction>
    <physiologicalReaction direction="left-to-right" evidence="1">
        <dbReference type="Rhea" id="RHEA:14086"/>
    </physiologicalReaction>
</comment>
<comment type="catalytic activity">
    <reaction evidence="1">
        <text>5-methylaminomethyl-S-(2E)-geranyl-thiouridine(34) in tRNA + selenophosphate + H(+) = 5-methylaminomethyl-2-(Se-phospho)selenouridine(34) in tRNA + (2E)-thiogeraniol</text>
        <dbReference type="Rhea" id="RHEA:60172"/>
        <dbReference type="Rhea" id="RHEA-COMP:14654"/>
        <dbReference type="Rhea" id="RHEA-COMP:15523"/>
        <dbReference type="ChEBI" id="CHEBI:15378"/>
        <dbReference type="ChEBI" id="CHEBI:16144"/>
        <dbReference type="ChEBI" id="CHEBI:140632"/>
        <dbReference type="ChEBI" id="CHEBI:143702"/>
        <dbReference type="ChEBI" id="CHEBI:143703"/>
    </reaction>
    <physiologicalReaction direction="left-to-right" evidence="1">
        <dbReference type="Rhea" id="RHEA:60173"/>
    </physiologicalReaction>
</comment>
<comment type="catalytic activity">
    <reaction evidence="1">
        <text>5-methylaminomethyl-2-(Se-phospho)selenouridine(34) in tRNA + H2O = 5-methylaminomethyl-2-selenouridine(34) in tRNA + phosphate</text>
        <dbReference type="Rhea" id="RHEA:60176"/>
        <dbReference type="Rhea" id="RHEA-COMP:10196"/>
        <dbReference type="Rhea" id="RHEA-COMP:15523"/>
        <dbReference type="ChEBI" id="CHEBI:15377"/>
        <dbReference type="ChEBI" id="CHEBI:43474"/>
        <dbReference type="ChEBI" id="CHEBI:82743"/>
        <dbReference type="ChEBI" id="CHEBI:143702"/>
    </reaction>
    <physiologicalReaction direction="left-to-right" evidence="1">
        <dbReference type="Rhea" id="RHEA:60177"/>
    </physiologicalReaction>
</comment>
<comment type="subunit">
    <text evidence="1">Monomer.</text>
</comment>
<comment type="similarity">
    <text evidence="1">Belongs to the SelU family.</text>
</comment>
<evidence type="ECO:0000255" key="1">
    <source>
        <dbReference type="HAMAP-Rule" id="MF_01622"/>
    </source>
</evidence>
<sequence length="366" mass="41128">MREDTGDFRRLFLSGTPMMDVRAPLEFARGAFPGTVNLPLMDDEERHQVGLCYAEKGQHAAIELGHRLVWGALKATRIAQWADFARAHPDGYLYCFRGGLRSQIVQQWLRDEAGIDYPRVTGGYKAMRGFLIDVIEQAAAKQDFLVLGGLTGTGKTDVIAEVPAAVDLEGLACHRGSAFGRRAQPQPQQIDFENSLAIDVLQRAEAGYRALVVEDEGRFIGGRDLPKVLWQRMQASPMVWLEASFEERVERVLRDYVLGLAAEHIEQLGPVAGFEAYATRLRDAMAAISPRLGSERYGRLSALLEQALTSQSERGETAPHRAWIEVLLRDYYDPMYAYQEEKRAARVVFRGDRAAVTDWLRERSAR</sequence>
<accession>Q476K0</accession>
<feature type="chain" id="PRO_0000210870" description="tRNA 2-selenouridine synthase">
    <location>
        <begin position="1"/>
        <end position="366"/>
    </location>
</feature>
<feature type="domain" description="Rhodanese" evidence="1">
    <location>
        <begin position="12"/>
        <end position="136"/>
    </location>
</feature>
<feature type="active site" description="S-selanylcysteine intermediate" evidence="1">
    <location>
        <position position="95"/>
    </location>
</feature>
<organism>
    <name type="scientific">Cupriavidus pinatubonensis (strain JMP 134 / LMG 1197)</name>
    <name type="common">Cupriavidus necator (strain JMP 134)</name>
    <dbReference type="NCBI Taxonomy" id="264198"/>
    <lineage>
        <taxon>Bacteria</taxon>
        <taxon>Pseudomonadati</taxon>
        <taxon>Pseudomonadota</taxon>
        <taxon>Betaproteobacteria</taxon>
        <taxon>Burkholderiales</taxon>
        <taxon>Burkholderiaceae</taxon>
        <taxon>Cupriavidus</taxon>
    </lineage>
</organism>
<reference key="1">
    <citation type="journal article" date="2010" name="PLoS ONE">
        <title>The complete multipartite genome sequence of Cupriavidus necator JMP134, a versatile pollutant degrader.</title>
        <authorList>
            <person name="Lykidis A."/>
            <person name="Perez-Pantoja D."/>
            <person name="Ledger T."/>
            <person name="Mavromatis K."/>
            <person name="Anderson I.J."/>
            <person name="Ivanova N.N."/>
            <person name="Hooper S.D."/>
            <person name="Lapidus A."/>
            <person name="Lucas S."/>
            <person name="Gonzalez B."/>
            <person name="Kyrpides N.C."/>
        </authorList>
    </citation>
    <scope>NUCLEOTIDE SEQUENCE [LARGE SCALE GENOMIC DNA]</scope>
    <source>
        <strain>JMP134 / LMG 1197</strain>
    </source>
</reference>
<proteinExistence type="inferred from homology"/>
<name>SELU_CUPPJ</name>
<keyword id="KW-0711">Selenium</keyword>
<keyword id="KW-0808">Transferase</keyword>
<gene>
    <name evidence="1" type="primary">selU</name>
    <name type="ordered locus">Reut_A0301</name>
</gene>
<protein>
    <recommendedName>
        <fullName evidence="1">tRNA 2-selenouridine synthase</fullName>
        <ecNumber evidence="1">2.9.1.3</ecNumber>
    </recommendedName>
</protein>
<dbReference type="EC" id="2.9.1.3" evidence="1"/>
<dbReference type="EMBL" id="CP000090">
    <property type="protein sequence ID" value="AAZ59683.1"/>
    <property type="molecule type" value="Genomic_DNA"/>
</dbReference>
<dbReference type="SMR" id="Q476K0"/>
<dbReference type="STRING" id="264198.Reut_A0301"/>
<dbReference type="KEGG" id="reu:Reut_A0301"/>
<dbReference type="eggNOG" id="COG2603">
    <property type="taxonomic scope" value="Bacteria"/>
</dbReference>
<dbReference type="HOGENOM" id="CLU_043456_1_0_4"/>
<dbReference type="OrthoDB" id="9808735at2"/>
<dbReference type="GO" id="GO:0016765">
    <property type="term" value="F:transferase activity, transferring alkyl or aryl (other than methyl) groups"/>
    <property type="evidence" value="ECO:0007669"/>
    <property type="project" value="UniProtKB-UniRule"/>
</dbReference>
<dbReference type="GO" id="GO:0043828">
    <property type="term" value="F:tRNA 2-selenouridine synthase activity"/>
    <property type="evidence" value="ECO:0007669"/>
    <property type="project" value="UniProtKB-EC"/>
</dbReference>
<dbReference type="GO" id="GO:0002098">
    <property type="term" value="P:tRNA wobble uridine modification"/>
    <property type="evidence" value="ECO:0007669"/>
    <property type="project" value="UniProtKB-UniRule"/>
</dbReference>
<dbReference type="CDD" id="cd01520">
    <property type="entry name" value="RHOD_YbbB"/>
    <property type="match status" value="1"/>
</dbReference>
<dbReference type="Gene3D" id="3.40.250.10">
    <property type="entry name" value="Rhodanese-like domain"/>
    <property type="match status" value="1"/>
</dbReference>
<dbReference type="HAMAP" id="MF_01622">
    <property type="entry name" value="tRNA_sel_U_synth"/>
    <property type="match status" value="1"/>
</dbReference>
<dbReference type="InterPro" id="IPR001763">
    <property type="entry name" value="Rhodanese-like_dom"/>
</dbReference>
<dbReference type="InterPro" id="IPR036873">
    <property type="entry name" value="Rhodanese-like_dom_sf"/>
</dbReference>
<dbReference type="InterPro" id="IPR017582">
    <property type="entry name" value="SelU"/>
</dbReference>
<dbReference type="NCBIfam" id="NF008751">
    <property type="entry name" value="PRK11784.1-3"/>
    <property type="match status" value="1"/>
</dbReference>
<dbReference type="NCBIfam" id="TIGR03167">
    <property type="entry name" value="tRNA_sel_U_synt"/>
    <property type="match status" value="1"/>
</dbReference>
<dbReference type="PANTHER" id="PTHR30401">
    <property type="entry name" value="TRNA 2-SELENOURIDINE SYNTHASE"/>
    <property type="match status" value="1"/>
</dbReference>
<dbReference type="PANTHER" id="PTHR30401:SF0">
    <property type="entry name" value="TRNA 2-SELENOURIDINE SYNTHASE"/>
    <property type="match status" value="1"/>
</dbReference>
<dbReference type="SMART" id="SM00450">
    <property type="entry name" value="RHOD"/>
    <property type="match status" value="1"/>
</dbReference>
<dbReference type="SUPFAM" id="SSF52821">
    <property type="entry name" value="Rhodanese/Cell cycle control phosphatase"/>
    <property type="match status" value="1"/>
</dbReference>
<dbReference type="PROSITE" id="PS50206">
    <property type="entry name" value="RHODANESE_3"/>
    <property type="match status" value="1"/>
</dbReference>